<protein>
    <recommendedName>
        <fullName>LYR motif-containing protein 2</fullName>
    </recommendedName>
</protein>
<organism>
    <name type="scientific">Xenopus laevis</name>
    <name type="common">African clawed frog</name>
    <dbReference type="NCBI Taxonomy" id="8355"/>
    <lineage>
        <taxon>Eukaryota</taxon>
        <taxon>Metazoa</taxon>
        <taxon>Chordata</taxon>
        <taxon>Craniata</taxon>
        <taxon>Vertebrata</taxon>
        <taxon>Euteleostomi</taxon>
        <taxon>Amphibia</taxon>
        <taxon>Batrachia</taxon>
        <taxon>Anura</taxon>
        <taxon>Pipoidea</taxon>
        <taxon>Pipidae</taxon>
        <taxon>Xenopodinae</taxon>
        <taxon>Xenopus</taxon>
        <taxon>Xenopus</taxon>
    </lineage>
</organism>
<dbReference type="EMBL" id="BC087314">
    <property type="protein sequence ID" value="AAH87314.1"/>
    <property type="molecule type" value="mRNA"/>
</dbReference>
<dbReference type="RefSeq" id="NP_001165156.1">
    <property type="nucleotide sequence ID" value="NM_001171685.1"/>
</dbReference>
<dbReference type="SMR" id="Q5PQ90"/>
<dbReference type="DNASU" id="495945"/>
<dbReference type="GeneID" id="495945"/>
<dbReference type="KEGG" id="xla:495945"/>
<dbReference type="AGR" id="Xenbase:XB-GENE-5753231"/>
<dbReference type="CTD" id="495945"/>
<dbReference type="Xenbase" id="XB-GENE-5753231">
    <property type="gene designation" value="lyrm2.S"/>
</dbReference>
<dbReference type="OrthoDB" id="74240at2759"/>
<dbReference type="Proteomes" id="UP000186698">
    <property type="component" value="Chromosome 1S"/>
</dbReference>
<dbReference type="Bgee" id="495945">
    <property type="expression patterns" value="Expressed in internal ear and 6 other cell types or tissues"/>
</dbReference>
<dbReference type="GO" id="GO:0005739">
    <property type="term" value="C:mitochondrion"/>
    <property type="evidence" value="ECO:0007669"/>
    <property type="project" value="UniProtKB-SubCell"/>
</dbReference>
<dbReference type="GO" id="GO:0032981">
    <property type="term" value="P:mitochondrial respiratory chain complex I assembly"/>
    <property type="evidence" value="ECO:0000250"/>
    <property type="project" value="UniProtKB"/>
</dbReference>
<dbReference type="CDD" id="cd20262">
    <property type="entry name" value="Complex1_LYR_LYRM2"/>
    <property type="match status" value="1"/>
</dbReference>
<dbReference type="InterPro" id="IPR008011">
    <property type="entry name" value="Complex1_LYR_dom"/>
</dbReference>
<dbReference type="InterPro" id="IPR045293">
    <property type="entry name" value="Complex1_LYR_LYRM2"/>
</dbReference>
<dbReference type="PANTHER" id="PTHR13675">
    <property type="entry name" value="LYR MOTIF-CONTAINING PROTEIN 2"/>
    <property type="match status" value="1"/>
</dbReference>
<dbReference type="PANTHER" id="PTHR13675:SF0">
    <property type="entry name" value="LYR MOTIF-CONTAINING PROTEIN 2"/>
    <property type="match status" value="1"/>
</dbReference>
<dbReference type="Pfam" id="PF05347">
    <property type="entry name" value="Complex1_LYR"/>
    <property type="match status" value="1"/>
</dbReference>
<name>LYRM2_XENLA</name>
<feature type="transit peptide" description="Mitochondrion" evidence="2">
    <location>
        <begin position="1"/>
        <end position="19"/>
    </location>
</feature>
<feature type="chain" id="PRO_0000359764" description="LYR motif-containing protein 2">
    <location>
        <begin position="20"/>
        <end position="87"/>
    </location>
</feature>
<reference key="1">
    <citation type="submission" date="2004-12" db="EMBL/GenBank/DDBJ databases">
        <authorList>
            <consortium name="NIH - Xenopus Gene Collection (XGC) project"/>
        </authorList>
    </citation>
    <scope>NUCLEOTIDE SEQUENCE [LARGE SCALE MRNA]</scope>
    <source>
        <tissue>Testis</tissue>
    </source>
</reference>
<keyword id="KW-0496">Mitochondrion</keyword>
<keyword id="KW-1185">Reference proteome</keyword>
<keyword id="KW-0809">Transit peptide</keyword>
<sequence>MGSRLPPAALTLKQFLVRQQVLGLYRRIVRAVRQIPGAADRQYLQDWARDEFRRNKGASEEIAIRMMISHGQRQLQELERALQLAKS</sequence>
<comment type="function">
    <text evidence="1">Involved in efficient integration of the N-module into mitochondrial respiratory chain complex I.</text>
</comment>
<comment type="subcellular location">
    <subcellularLocation>
        <location evidence="1">Mitochondrion</location>
    </subcellularLocation>
</comment>
<comment type="similarity">
    <text evidence="3">Belongs to the complex I LYR family.</text>
</comment>
<gene>
    <name type="primary">lyrm2</name>
</gene>
<proteinExistence type="inferred from homology"/>
<evidence type="ECO:0000250" key="1">
    <source>
        <dbReference type="UniProtKB" id="Q9NU23"/>
    </source>
</evidence>
<evidence type="ECO:0000255" key="2"/>
<evidence type="ECO:0000305" key="3"/>
<accession>Q5PQ90</accession>